<reference key="1">
    <citation type="submission" date="2008-04" db="EMBL/GenBank/DDBJ databases">
        <title>Complete sequence of Yersinia pseudotuberculosis PB1/+.</title>
        <authorList>
            <person name="Copeland A."/>
            <person name="Lucas S."/>
            <person name="Lapidus A."/>
            <person name="Glavina del Rio T."/>
            <person name="Dalin E."/>
            <person name="Tice H."/>
            <person name="Bruce D."/>
            <person name="Goodwin L."/>
            <person name="Pitluck S."/>
            <person name="Munk A.C."/>
            <person name="Brettin T."/>
            <person name="Detter J.C."/>
            <person name="Han C."/>
            <person name="Tapia R."/>
            <person name="Schmutz J."/>
            <person name="Larimer F."/>
            <person name="Land M."/>
            <person name="Hauser L."/>
            <person name="Challacombe J.F."/>
            <person name="Green L."/>
            <person name="Lindler L.E."/>
            <person name="Nikolich M.P."/>
            <person name="Richardson P."/>
        </authorList>
    </citation>
    <scope>NUCLEOTIDE SEQUENCE [LARGE SCALE GENOMIC DNA]</scope>
    <source>
        <strain>PB1/+</strain>
    </source>
</reference>
<dbReference type="EMBL" id="CP001048">
    <property type="protein sequence ID" value="ACC88806.1"/>
    <property type="molecule type" value="Genomic_DNA"/>
</dbReference>
<dbReference type="RefSeq" id="WP_011192185.1">
    <property type="nucleotide sequence ID" value="NZ_CP009780.1"/>
</dbReference>
<dbReference type="SMR" id="B2K177"/>
<dbReference type="GeneID" id="49786212"/>
<dbReference type="KEGG" id="ypb:YPTS_1839"/>
<dbReference type="PATRIC" id="fig|502801.10.peg.1219"/>
<dbReference type="GO" id="GO:0005829">
    <property type="term" value="C:cytosol"/>
    <property type="evidence" value="ECO:0007669"/>
    <property type="project" value="UniProtKB-SubCell"/>
</dbReference>
<dbReference type="GO" id="GO:0044781">
    <property type="term" value="P:bacterial-type flagellum organization"/>
    <property type="evidence" value="ECO:0007669"/>
    <property type="project" value="UniProtKB-KW"/>
</dbReference>
<dbReference type="GO" id="GO:1902209">
    <property type="term" value="P:negative regulation of bacterial-type flagellum assembly"/>
    <property type="evidence" value="ECO:0007669"/>
    <property type="project" value="UniProtKB-UniRule"/>
</dbReference>
<dbReference type="GO" id="GO:0006457">
    <property type="term" value="P:protein folding"/>
    <property type="evidence" value="ECO:0007669"/>
    <property type="project" value="UniProtKB-UniRule"/>
</dbReference>
<dbReference type="Gene3D" id="1.20.58.380">
    <property type="entry name" value="Flagellar protein flit"/>
    <property type="match status" value="1"/>
</dbReference>
<dbReference type="HAMAP" id="MF_01180">
    <property type="entry name" value="FliT"/>
    <property type="match status" value="1"/>
</dbReference>
<dbReference type="InterPro" id="IPR008622">
    <property type="entry name" value="FliT"/>
</dbReference>
<dbReference type="NCBIfam" id="NF007836">
    <property type="entry name" value="PRK10548.1"/>
    <property type="match status" value="1"/>
</dbReference>
<dbReference type="Pfam" id="PF05400">
    <property type="entry name" value="FliT"/>
    <property type="match status" value="1"/>
</dbReference>
<organism>
    <name type="scientific">Yersinia pseudotuberculosis serotype IB (strain PB1/+)</name>
    <dbReference type="NCBI Taxonomy" id="502801"/>
    <lineage>
        <taxon>Bacteria</taxon>
        <taxon>Pseudomonadati</taxon>
        <taxon>Pseudomonadota</taxon>
        <taxon>Gammaproteobacteria</taxon>
        <taxon>Enterobacterales</taxon>
        <taxon>Yersiniaceae</taxon>
        <taxon>Yersinia</taxon>
    </lineage>
</organism>
<gene>
    <name evidence="1" type="primary">fliT</name>
    <name type="ordered locus">YPTS_1839</name>
</gene>
<protein>
    <recommendedName>
        <fullName evidence="1">Flagellar protein FliT</fullName>
    </recommendedName>
</protein>
<proteinExistence type="inferred from homology"/>
<sequence length="120" mass="13869">MERHQHLLSEYQQILTLSEQMLMLATVENWDALVDLEMAYLKAVENTANITISSCSSPVLQELLRQKLRSILENEIEIKRLLQRRLDKLSELVGQSTRQQAVNRTYGQFPDQALLLGETQ</sequence>
<comment type="function">
    <text evidence="1">Dual-function protein that regulates the transcription of class 2 flagellar operons and that also acts as an export chaperone for the filament-capping protein FliD. As a transcriptional regulator, acts as an anti-FlhDC factor; it directly binds FlhC, thus inhibiting the binding of the FlhC/FlhD complex to class 2 promoters, resulting in decreased expression of class 2 flagellar operons. As a chaperone, effects FliD transition to the membrane by preventing its premature polymerization, and by directing it to the export apparatus.</text>
</comment>
<comment type="subunit">
    <text evidence="1">Homodimer. Interacts with FliD and FlhC.</text>
</comment>
<comment type="subcellular location">
    <subcellularLocation>
        <location evidence="1">Cytoplasm</location>
        <location evidence="1">Cytosol</location>
    </subcellularLocation>
</comment>
<comment type="similarity">
    <text evidence="1">Belongs to the FliT family.</text>
</comment>
<evidence type="ECO:0000255" key="1">
    <source>
        <dbReference type="HAMAP-Rule" id="MF_01180"/>
    </source>
</evidence>
<feature type="chain" id="PRO_0000353902" description="Flagellar protein FliT">
    <location>
        <begin position="1"/>
        <end position="120"/>
    </location>
</feature>
<feature type="region of interest" description="Required for homodimerization" evidence="1">
    <location>
        <begin position="1"/>
        <end position="50"/>
    </location>
</feature>
<feature type="region of interest" description="FliD binding" evidence="1">
    <location>
        <begin position="60"/>
        <end position="98"/>
    </location>
</feature>
<keyword id="KW-1005">Bacterial flagellum biogenesis</keyword>
<keyword id="KW-0143">Chaperone</keyword>
<keyword id="KW-0963">Cytoplasm</keyword>
<keyword id="KW-0678">Repressor</keyword>
<keyword id="KW-0804">Transcription</keyword>
<keyword id="KW-0805">Transcription regulation</keyword>
<accession>B2K177</accession>
<name>FLIT_YERPB</name>